<comment type="function">
    <text evidence="1">One of the components of the core complex of photosystem II (PSII). It binds chlorophyll and helps catalyze the primary light-induced photochemical processes of PSII. PSII is a light-driven water:plastoquinone oxidoreductase, using light energy to abstract electrons from H(2)O, generating O(2) and a proton gradient subsequently used for ATP formation.</text>
</comment>
<comment type="cofactor">
    <text evidence="1">Binds multiple chlorophylls and provides some of the ligands for the Ca-4Mn-5O cluster of the oxygen-evolving complex. It may also provide a ligand for a Cl- that is required for oxygen evolution. PSII binds additional chlorophylls, carotenoids and specific lipids.</text>
</comment>
<comment type="subunit">
    <text evidence="1">PSII is composed of 1 copy each of membrane proteins PsbA, PsbB, PsbC, PsbD, PsbE, PsbF, PsbH, PsbI, PsbJ, PsbK, PsbL, PsbM, PsbT, PsbX, PsbY, PsbZ, Psb30/Ycf12, at least 3 peripheral proteins of the oxygen-evolving complex and a large number of cofactors. It forms dimeric complexes.</text>
</comment>
<comment type="subcellular location">
    <subcellularLocation>
        <location evidence="1">Plastid</location>
        <location evidence="1">Chloroplast thylakoid membrane</location>
        <topology evidence="1">Multi-pass membrane protein</topology>
    </subcellularLocation>
</comment>
<comment type="similarity">
    <text evidence="1">Belongs to the PsbB/PsbC family. PsbC subfamily.</text>
</comment>
<evidence type="ECO:0000255" key="1">
    <source>
        <dbReference type="HAMAP-Rule" id="MF_01496"/>
    </source>
</evidence>
<accession>Q2MIJ1</accession>
<reference key="1">
    <citation type="journal article" date="2006" name="Theor. Appl. Genet.">
        <title>Complete chloroplast genome sequences of Solanum bulbocastanum, Solanum lycopersicum and comparative analyses with other Solanaceae genomes.</title>
        <authorList>
            <person name="Daniell H."/>
            <person name="Lee S.-B."/>
            <person name="Grevich J."/>
            <person name="Saski C."/>
            <person name="Quesada-Vargas T."/>
            <person name="Guda C."/>
            <person name="Tomkins J."/>
            <person name="Jansen R.K."/>
        </authorList>
    </citation>
    <scope>NUCLEOTIDE SEQUENCE [LARGE SCALE GENOMIC DNA]</scope>
    <source>
        <strain>cv. PT29</strain>
    </source>
</reference>
<proteinExistence type="inferred from homology"/>
<protein>
    <recommendedName>
        <fullName evidence="1">Photosystem II CP43 reaction center protein</fullName>
    </recommendedName>
    <alternativeName>
        <fullName evidence="1">PSII 43 kDa protein</fullName>
    </alternativeName>
    <alternativeName>
        <fullName evidence="1">Protein CP-43</fullName>
    </alternativeName>
</protein>
<name>PSBC_SOLBU</name>
<geneLocation type="chloroplast"/>
<feature type="propeptide" id="PRO_0000431208" evidence="1">
    <location>
        <begin position="1"/>
        <end position="14"/>
    </location>
</feature>
<feature type="chain" id="PRO_0000361494" description="Photosystem II CP43 reaction center protein" evidence="1">
    <location>
        <begin position="15"/>
        <end position="473"/>
    </location>
</feature>
<feature type="transmembrane region" description="Helical" evidence="1">
    <location>
        <begin position="69"/>
        <end position="93"/>
    </location>
</feature>
<feature type="transmembrane region" description="Helical" evidence="1">
    <location>
        <begin position="134"/>
        <end position="155"/>
    </location>
</feature>
<feature type="transmembrane region" description="Helical" evidence="1">
    <location>
        <begin position="178"/>
        <end position="200"/>
    </location>
</feature>
<feature type="transmembrane region" description="Helical" evidence="1">
    <location>
        <begin position="255"/>
        <end position="275"/>
    </location>
</feature>
<feature type="transmembrane region" description="Helical" evidence="1">
    <location>
        <begin position="291"/>
        <end position="312"/>
    </location>
</feature>
<feature type="transmembrane region" description="Helical" evidence="1">
    <location>
        <begin position="447"/>
        <end position="471"/>
    </location>
</feature>
<feature type="binding site" evidence="1">
    <location>
        <position position="367"/>
    </location>
    <ligand>
        <name>[CaMn4O5] cluster</name>
        <dbReference type="ChEBI" id="CHEBI:189552"/>
    </ligand>
</feature>
<feature type="modified residue" description="N-acetylthreonine" evidence="1">
    <location>
        <position position="15"/>
    </location>
</feature>
<feature type="modified residue" description="Phosphothreonine" evidence="1">
    <location>
        <position position="15"/>
    </location>
</feature>
<keyword id="KW-0007">Acetylation</keyword>
<keyword id="KW-0148">Chlorophyll</keyword>
<keyword id="KW-0150">Chloroplast</keyword>
<keyword id="KW-0157">Chromophore</keyword>
<keyword id="KW-0464">Manganese</keyword>
<keyword id="KW-0472">Membrane</keyword>
<keyword id="KW-0479">Metal-binding</keyword>
<keyword id="KW-0597">Phosphoprotein</keyword>
<keyword id="KW-0602">Photosynthesis</keyword>
<keyword id="KW-0604">Photosystem II</keyword>
<keyword id="KW-0934">Plastid</keyword>
<keyword id="KW-0793">Thylakoid</keyword>
<keyword id="KW-0812">Transmembrane</keyword>
<keyword id="KW-1133">Transmembrane helix</keyword>
<gene>
    <name evidence="1" type="primary">psbC</name>
</gene>
<sequence>MKTLYSRRRFYHVETLFNGTLALAGRDQETTGFAWWAGNARLINLSGKLLGAHVAHAGLIVFWAGAMNLFEVAHFVPEKPMYEQGLILLPHLATLGWGVGPGGEVIDTFPYFVSGVLHLISSAVLGFGGIYHALLGPETLEESFPFFGYVWKDRNKMTTILGIHLILLGIGAFLLVFKALYFGGVYDTWAPGGGDVRKITNLTLSPSIIFGYLLKSPFGGEGWIVSVDDLEDIIGGHVWLGSICILGGIWHILTKPFAWARRALVWSGEAYLSYSLGALAVFGFIACCFVWFNNTAYPSEFYGPTGPEASQAQAFTFLVRDQRLGANVGSAQGPTGLGKYLMRSPTGEVIFGGETMRFWDLRAPWLEPLRGPNGLDLSRLKKDIQPWQERRSAEYMTHAPLGSLNSVGGVATEINAVNYVSPRSWLATSHFVLGFFFFVGHLWHAGRARAAAAGFEKGIDRDFEPVLSMTPLN</sequence>
<dbReference type="EMBL" id="DQ347958">
    <property type="protein sequence ID" value="ABC56209.1"/>
    <property type="molecule type" value="Genomic_DNA"/>
</dbReference>
<dbReference type="RefSeq" id="YP_538844.1">
    <property type="nucleotide sequence ID" value="NC_007943.1"/>
</dbReference>
<dbReference type="SMR" id="Q2MIJ1"/>
<dbReference type="GeneID" id="3989529"/>
<dbReference type="GO" id="GO:0009535">
    <property type="term" value="C:chloroplast thylakoid membrane"/>
    <property type="evidence" value="ECO:0007669"/>
    <property type="project" value="UniProtKB-SubCell"/>
</dbReference>
<dbReference type="GO" id="GO:0009523">
    <property type="term" value="C:photosystem II"/>
    <property type="evidence" value="ECO:0007669"/>
    <property type="project" value="UniProtKB-KW"/>
</dbReference>
<dbReference type="GO" id="GO:0016168">
    <property type="term" value="F:chlorophyll binding"/>
    <property type="evidence" value="ECO:0007669"/>
    <property type="project" value="UniProtKB-UniRule"/>
</dbReference>
<dbReference type="GO" id="GO:0045156">
    <property type="term" value="F:electron transporter, transferring electrons within the cyclic electron transport pathway of photosynthesis activity"/>
    <property type="evidence" value="ECO:0007669"/>
    <property type="project" value="InterPro"/>
</dbReference>
<dbReference type="GO" id="GO:0046872">
    <property type="term" value="F:metal ion binding"/>
    <property type="evidence" value="ECO:0007669"/>
    <property type="project" value="UniProtKB-KW"/>
</dbReference>
<dbReference type="GO" id="GO:0009772">
    <property type="term" value="P:photosynthetic electron transport in photosystem II"/>
    <property type="evidence" value="ECO:0007669"/>
    <property type="project" value="InterPro"/>
</dbReference>
<dbReference type="FunFam" id="1.10.10.670:FF:000001">
    <property type="entry name" value="Photosystem II CP43 reaction center protein"/>
    <property type="match status" value="1"/>
</dbReference>
<dbReference type="Gene3D" id="1.10.10.670">
    <property type="entry name" value="photosystem ii from thermosynechococcus elongatus"/>
    <property type="match status" value="1"/>
</dbReference>
<dbReference type="HAMAP" id="MF_01496">
    <property type="entry name" value="PSII_PsbC_CP43"/>
    <property type="match status" value="1"/>
</dbReference>
<dbReference type="InterPro" id="IPR000932">
    <property type="entry name" value="PS_antenna-like"/>
</dbReference>
<dbReference type="InterPro" id="IPR036001">
    <property type="entry name" value="PS_II_antenna-like_sf"/>
</dbReference>
<dbReference type="InterPro" id="IPR005869">
    <property type="entry name" value="PSII_PsbC"/>
</dbReference>
<dbReference type="InterPro" id="IPR044900">
    <property type="entry name" value="PSII_PsbC_sf"/>
</dbReference>
<dbReference type="NCBIfam" id="TIGR01153">
    <property type="entry name" value="psbC"/>
    <property type="match status" value="1"/>
</dbReference>
<dbReference type="Pfam" id="PF00421">
    <property type="entry name" value="PSII"/>
    <property type="match status" value="1"/>
</dbReference>
<dbReference type="SUPFAM" id="SSF161077">
    <property type="entry name" value="Photosystem II antenna protein-like"/>
    <property type="match status" value="1"/>
</dbReference>
<organism>
    <name type="scientific">Solanum bulbocastanum</name>
    <name type="common">Wild potato</name>
    <dbReference type="NCBI Taxonomy" id="147425"/>
    <lineage>
        <taxon>Eukaryota</taxon>
        <taxon>Viridiplantae</taxon>
        <taxon>Streptophyta</taxon>
        <taxon>Embryophyta</taxon>
        <taxon>Tracheophyta</taxon>
        <taxon>Spermatophyta</taxon>
        <taxon>Magnoliopsida</taxon>
        <taxon>eudicotyledons</taxon>
        <taxon>Gunneridae</taxon>
        <taxon>Pentapetalae</taxon>
        <taxon>asterids</taxon>
        <taxon>lamiids</taxon>
        <taxon>Solanales</taxon>
        <taxon>Solanaceae</taxon>
        <taxon>Solanoideae</taxon>
        <taxon>Solaneae</taxon>
        <taxon>Solanum</taxon>
    </lineage>
</organism>